<accession>B2S014</accession>
<comment type="function">
    <text evidence="1">Catalyzes the initial step of the lipid cycle reactions in the biosynthesis of the cell wall peptidoglycan: transfers peptidoglycan precursor phospho-MurNAc-pentapeptide from UDP-MurNAc-pentapeptide onto the lipid carrier undecaprenyl phosphate, yielding undecaprenyl-pyrophosphoryl-MurNAc-pentapeptide, known as lipid I.</text>
</comment>
<comment type="catalytic activity">
    <reaction evidence="1">
        <text>UDP-N-acetyl-alpha-D-muramoyl-L-alanyl-gamma-D-glutamyl-meso-2,6-diaminopimeloyl-D-alanyl-D-alanine + di-trans,octa-cis-undecaprenyl phosphate = di-trans,octa-cis-undecaprenyl diphospho-N-acetyl-alpha-D-muramoyl-L-alanyl-D-glutamyl-meso-2,6-diaminopimeloyl-D-alanyl-D-alanine + UMP</text>
        <dbReference type="Rhea" id="RHEA:28386"/>
        <dbReference type="ChEBI" id="CHEBI:57865"/>
        <dbReference type="ChEBI" id="CHEBI:60392"/>
        <dbReference type="ChEBI" id="CHEBI:61386"/>
        <dbReference type="ChEBI" id="CHEBI:61387"/>
        <dbReference type="EC" id="2.7.8.13"/>
    </reaction>
</comment>
<comment type="cofactor">
    <cofactor evidence="1">
        <name>Mg(2+)</name>
        <dbReference type="ChEBI" id="CHEBI:18420"/>
    </cofactor>
</comment>
<comment type="pathway">
    <text evidence="1">Cell wall biogenesis; peptidoglycan biosynthesis.</text>
</comment>
<comment type="subcellular location">
    <subcellularLocation>
        <location evidence="1">Cell inner membrane</location>
        <topology evidence="1">Multi-pass membrane protein</topology>
    </subcellularLocation>
</comment>
<comment type="similarity">
    <text evidence="1">Belongs to the glycosyltransferase 4 family. MraY subfamily.</text>
</comment>
<proteinExistence type="inferred from homology"/>
<gene>
    <name evidence="1" type="primary">mraY</name>
    <name type="ordered locus">BH0303</name>
</gene>
<sequence length="351" mass="39500">MFDLLGLRLLHYITFRTAYATIFAFLLALIFGPFIILRLKKLKLDQILREDGPKRHLSEKMGIPTMGGILIFFCVLVSLFFWINLWNVYFLIVLFVMISFACLGFMDDLLKIKRKNADGLNPRFKIYGQILFSCISVTMLYYFGGEHISIIYFPFFKSLKLDLGVLYIPFGMFILISASNSFNLTDGLDGLAIGLSIVVTGALVIIAYLTSRVDFATYLNIPNIKGSEELVIFLGALLGGSFGFLWFNAYPAKIMMGDTGSLSIGAVLGMTALILKSEILFAILAGVFVLETLSVIIQVAVYKKTKKRVFKMAPLHHHFEELGWSETQVVIRFWIIGLIFAIIALSTLKIR</sequence>
<protein>
    <recommendedName>
        <fullName evidence="1">Phospho-N-acetylmuramoyl-pentapeptide-transferase</fullName>
        <ecNumber evidence="1">2.7.8.13</ecNumber>
    </recommendedName>
    <alternativeName>
        <fullName evidence="1">UDP-MurNAc-pentapeptide phosphotransferase</fullName>
    </alternativeName>
</protein>
<name>MRAY_BORHD</name>
<keyword id="KW-0131">Cell cycle</keyword>
<keyword id="KW-0132">Cell division</keyword>
<keyword id="KW-0997">Cell inner membrane</keyword>
<keyword id="KW-1003">Cell membrane</keyword>
<keyword id="KW-0133">Cell shape</keyword>
<keyword id="KW-0961">Cell wall biogenesis/degradation</keyword>
<keyword id="KW-0460">Magnesium</keyword>
<keyword id="KW-0472">Membrane</keyword>
<keyword id="KW-0479">Metal-binding</keyword>
<keyword id="KW-0573">Peptidoglycan synthesis</keyword>
<keyword id="KW-0808">Transferase</keyword>
<keyword id="KW-0812">Transmembrane</keyword>
<keyword id="KW-1133">Transmembrane helix</keyword>
<dbReference type="EC" id="2.7.8.13" evidence="1"/>
<dbReference type="EMBL" id="CP000048">
    <property type="protein sequence ID" value="AAX16820.1"/>
    <property type="molecule type" value="Genomic_DNA"/>
</dbReference>
<dbReference type="RefSeq" id="WP_012422077.1">
    <property type="nucleotide sequence ID" value="NZ_CP073136.1"/>
</dbReference>
<dbReference type="SMR" id="B2S014"/>
<dbReference type="GeneID" id="71843117"/>
<dbReference type="KEGG" id="bhr:BH0303"/>
<dbReference type="HOGENOM" id="CLU_023982_0_0_12"/>
<dbReference type="UniPathway" id="UPA00219"/>
<dbReference type="Proteomes" id="UP000008834">
    <property type="component" value="Chromosome"/>
</dbReference>
<dbReference type="GO" id="GO:0005886">
    <property type="term" value="C:plasma membrane"/>
    <property type="evidence" value="ECO:0007669"/>
    <property type="project" value="UniProtKB-SubCell"/>
</dbReference>
<dbReference type="GO" id="GO:0046872">
    <property type="term" value="F:metal ion binding"/>
    <property type="evidence" value="ECO:0007669"/>
    <property type="project" value="UniProtKB-KW"/>
</dbReference>
<dbReference type="GO" id="GO:0008963">
    <property type="term" value="F:phospho-N-acetylmuramoyl-pentapeptide-transferase activity"/>
    <property type="evidence" value="ECO:0007669"/>
    <property type="project" value="UniProtKB-UniRule"/>
</dbReference>
<dbReference type="GO" id="GO:0051992">
    <property type="term" value="F:UDP-N-acetylmuramoyl-L-alanyl-D-glutamyl-meso-2,6-diaminopimelyl-D-alanyl-D-alanine:undecaprenyl-phosphate transferase activity"/>
    <property type="evidence" value="ECO:0007669"/>
    <property type="project" value="RHEA"/>
</dbReference>
<dbReference type="GO" id="GO:0051301">
    <property type="term" value="P:cell division"/>
    <property type="evidence" value="ECO:0007669"/>
    <property type="project" value="UniProtKB-KW"/>
</dbReference>
<dbReference type="GO" id="GO:0071555">
    <property type="term" value="P:cell wall organization"/>
    <property type="evidence" value="ECO:0007669"/>
    <property type="project" value="UniProtKB-KW"/>
</dbReference>
<dbReference type="GO" id="GO:0009252">
    <property type="term" value="P:peptidoglycan biosynthetic process"/>
    <property type="evidence" value="ECO:0007669"/>
    <property type="project" value="UniProtKB-UniRule"/>
</dbReference>
<dbReference type="GO" id="GO:0008360">
    <property type="term" value="P:regulation of cell shape"/>
    <property type="evidence" value="ECO:0007669"/>
    <property type="project" value="UniProtKB-KW"/>
</dbReference>
<dbReference type="CDD" id="cd06852">
    <property type="entry name" value="GT_MraY"/>
    <property type="match status" value="1"/>
</dbReference>
<dbReference type="HAMAP" id="MF_00038">
    <property type="entry name" value="MraY"/>
    <property type="match status" value="1"/>
</dbReference>
<dbReference type="InterPro" id="IPR000715">
    <property type="entry name" value="Glycosyl_transferase_4"/>
</dbReference>
<dbReference type="InterPro" id="IPR003524">
    <property type="entry name" value="PNAcMuramoyl-5peptid_Trfase"/>
</dbReference>
<dbReference type="InterPro" id="IPR018480">
    <property type="entry name" value="PNAcMuramoyl-5peptid_Trfase_CS"/>
</dbReference>
<dbReference type="NCBIfam" id="TIGR00445">
    <property type="entry name" value="mraY"/>
    <property type="match status" value="1"/>
</dbReference>
<dbReference type="PANTHER" id="PTHR22926">
    <property type="entry name" value="PHOSPHO-N-ACETYLMURAMOYL-PENTAPEPTIDE-TRANSFERASE"/>
    <property type="match status" value="1"/>
</dbReference>
<dbReference type="PANTHER" id="PTHR22926:SF5">
    <property type="entry name" value="PHOSPHO-N-ACETYLMURAMOYL-PENTAPEPTIDE-TRANSFERASE HOMOLOG"/>
    <property type="match status" value="1"/>
</dbReference>
<dbReference type="Pfam" id="PF00953">
    <property type="entry name" value="Glycos_transf_4"/>
    <property type="match status" value="1"/>
</dbReference>
<dbReference type="PROSITE" id="PS01347">
    <property type="entry name" value="MRAY_1"/>
    <property type="match status" value="1"/>
</dbReference>
<dbReference type="PROSITE" id="PS01348">
    <property type="entry name" value="MRAY_2"/>
    <property type="match status" value="1"/>
</dbReference>
<feature type="chain" id="PRO_1000090595" description="Phospho-N-acetylmuramoyl-pentapeptide-transferase">
    <location>
        <begin position="1"/>
        <end position="351"/>
    </location>
</feature>
<feature type="transmembrane region" description="Helical" evidence="1">
    <location>
        <begin position="17"/>
        <end position="37"/>
    </location>
</feature>
<feature type="transmembrane region" description="Helical" evidence="1">
    <location>
        <begin position="63"/>
        <end position="83"/>
    </location>
</feature>
<feature type="transmembrane region" description="Helical" evidence="1">
    <location>
        <begin position="85"/>
        <end position="105"/>
    </location>
</feature>
<feature type="transmembrane region" description="Helical" evidence="1">
    <location>
        <begin position="135"/>
        <end position="155"/>
    </location>
</feature>
<feature type="transmembrane region" description="Helical" evidence="1">
    <location>
        <begin position="158"/>
        <end position="178"/>
    </location>
</feature>
<feature type="transmembrane region" description="Helical" evidence="1">
    <location>
        <begin position="190"/>
        <end position="210"/>
    </location>
</feature>
<feature type="transmembrane region" description="Helical" evidence="1">
    <location>
        <begin position="230"/>
        <end position="250"/>
    </location>
</feature>
<feature type="transmembrane region" description="Helical" evidence="1">
    <location>
        <begin position="254"/>
        <end position="274"/>
    </location>
</feature>
<feature type="transmembrane region" description="Helical" evidence="1">
    <location>
        <begin position="279"/>
        <end position="299"/>
    </location>
</feature>
<feature type="transmembrane region" description="Helical" evidence="1">
    <location>
        <begin position="328"/>
        <end position="348"/>
    </location>
</feature>
<evidence type="ECO:0000255" key="1">
    <source>
        <dbReference type="HAMAP-Rule" id="MF_00038"/>
    </source>
</evidence>
<organism>
    <name type="scientific">Borrelia hermsii (strain HS1 / DAH)</name>
    <dbReference type="NCBI Taxonomy" id="314723"/>
    <lineage>
        <taxon>Bacteria</taxon>
        <taxon>Pseudomonadati</taxon>
        <taxon>Spirochaetota</taxon>
        <taxon>Spirochaetia</taxon>
        <taxon>Spirochaetales</taxon>
        <taxon>Borreliaceae</taxon>
        <taxon>Borrelia</taxon>
    </lineage>
</organism>
<reference key="1">
    <citation type="submission" date="2004-12" db="EMBL/GenBank/DDBJ databases">
        <title>The genome sequence of Borrelia hermsii and Borrelia turicatae: comparative analysis of two agents of endemic N. America relapsing fever.</title>
        <authorList>
            <person name="Porcella S.F."/>
            <person name="Raffel S.J."/>
            <person name="Schrumpf M.E."/>
            <person name="Montgomery B."/>
            <person name="Smith T."/>
            <person name="Schwan T.G."/>
        </authorList>
    </citation>
    <scope>NUCLEOTIDE SEQUENCE [LARGE SCALE GENOMIC DNA]</scope>
    <source>
        <strain>HS1 / DAH</strain>
    </source>
</reference>